<reference key="1">
    <citation type="journal article" date="2009" name="Stand. Genomic Sci.">
        <title>Complete genome sequence of Sanguibacter keddieii type strain (ST-74).</title>
        <authorList>
            <person name="Ivanova N."/>
            <person name="Sikorski J."/>
            <person name="Sims D."/>
            <person name="Brettin T."/>
            <person name="Detter J.C."/>
            <person name="Han C."/>
            <person name="Lapidus A."/>
            <person name="Copeland A."/>
            <person name="Glavina Del Rio T."/>
            <person name="Nolan M."/>
            <person name="Chen F."/>
            <person name="Lucas S."/>
            <person name="Tice H."/>
            <person name="Cheng J.F."/>
            <person name="Bruce D."/>
            <person name="Goodwin L."/>
            <person name="Pitluck S."/>
            <person name="Pati A."/>
            <person name="Mavromatis K."/>
            <person name="Chen A."/>
            <person name="Palaniappan K."/>
            <person name="D'haeseleer P."/>
            <person name="Chain P."/>
            <person name="Bristow J."/>
            <person name="Eisen J.A."/>
            <person name="Markowitz V."/>
            <person name="Hugenholtz P."/>
            <person name="Goker M."/>
            <person name="Pukall R."/>
            <person name="Klenk H.P."/>
            <person name="Kyrpides N.C."/>
        </authorList>
    </citation>
    <scope>NUCLEOTIDE SEQUENCE [LARGE SCALE GENOMIC DNA]</scope>
    <source>
        <strain>ATCC 51767 / DSM 10542 / NCFB 3025 / ST-74</strain>
    </source>
</reference>
<keyword id="KW-0067">ATP-binding</keyword>
<keyword id="KW-0143">Chaperone</keyword>
<keyword id="KW-0175">Coiled coil</keyword>
<keyword id="KW-0547">Nucleotide-binding</keyword>
<keyword id="KW-0647">Proteasome</keyword>
<evidence type="ECO:0000255" key="1">
    <source>
        <dbReference type="HAMAP-Rule" id="MF_02112"/>
    </source>
</evidence>
<evidence type="ECO:0000256" key="2">
    <source>
        <dbReference type="SAM" id="MobiDB-lite"/>
    </source>
</evidence>
<name>ARC_SANKS</name>
<gene>
    <name evidence="1" type="primary">arc</name>
    <name type="ordered locus">Sked_20900</name>
</gene>
<comment type="function">
    <text evidence="1">ATPase which is responsible for recognizing, binding, unfolding and translocation of pupylated proteins into the bacterial 20S proteasome core particle. May be essential for opening the gate of the 20S proteasome via an interaction with its C-terminus, thereby allowing substrate entry and access to the site of proteolysis. Thus, the C-termini of the proteasomal ATPase may function like a 'key in a lock' to induce gate opening and therefore regulate proteolysis.</text>
</comment>
<comment type="pathway">
    <text evidence="1">Protein degradation; proteasomal Pup-dependent pathway.</text>
</comment>
<comment type="subunit">
    <text evidence="1">Homohexamer. Assembles into a hexameric ring structure that caps the 20S proteasome core. Strongly interacts with the prokaryotic ubiquitin-like protein Pup through a hydrophobic interface; the interacting region of ARC lies in its N-terminal coiled-coil domain. There is one Pup binding site per ARC hexamer ring. Upon ATP-binding, the C-terminus of ARC interacts with the alpha-rings of the proteasome core, possibly by binding to the intersubunit pockets.</text>
</comment>
<comment type="domain">
    <text evidence="1">Consists of three main regions, an N-terminal coiled-coil domain that binds to protein Pup and functions as a docking station, an interdomain involved in ARC hexamerization, and a C-terminal ATPase domain of the AAA type.</text>
</comment>
<comment type="similarity">
    <text evidence="1">Belongs to the AAA ATPase family.</text>
</comment>
<proteinExistence type="inferred from homology"/>
<accession>D1BHU2</accession>
<organism>
    <name type="scientific">Sanguibacter keddieii (strain ATCC 51767 / DSM 10542 / NCFB 3025 / ST-74)</name>
    <dbReference type="NCBI Taxonomy" id="446469"/>
    <lineage>
        <taxon>Bacteria</taxon>
        <taxon>Bacillati</taxon>
        <taxon>Actinomycetota</taxon>
        <taxon>Actinomycetes</taxon>
        <taxon>Micrococcales</taxon>
        <taxon>Sanguibacteraceae</taxon>
        <taxon>Sanguibacter</taxon>
    </lineage>
</organism>
<protein>
    <recommendedName>
        <fullName evidence="1">Proteasome-associated ATPase</fullName>
    </recommendedName>
    <alternativeName>
        <fullName evidence="1">AAA ATPase forming ring-shaped complexes</fullName>
        <shortName evidence="1">ARC</shortName>
    </alternativeName>
    <alternativeName>
        <fullName evidence="1">Proteasomal ATPase</fullName>
    </alternativeName>
</protein>
<sequence length="581" mass="63074">MTSSDLTQRKGLTMSDSTPDTPRSTPEDAARRLAVLSAQNERLAQVLGEARGKIVELQQQIEEFAKPPGTFAVFLAEHGDGTLDVMSAGRKMHVGASPSVDLTQLRPGQEVSLNEAFVVVAAGGFEPVGEIVTVKELLDDGRALVVGRSDEERVVRLAGSLAGAPLRAGDALTVDTRSGFVYERIPKAEVEDLVLEEVPDIDYGDIGGLGPQIEQIRDAVELPFNHPDLFREHGLRPPKGILLYGPPGCGKTLIAKAVANSLAAAVARRAAAAAEAGGTVDGSPVLVETANQAKSYFLNVKGPELLNKYVGETERHIRLIFSRAREKASQGYPVVVFFDEMESLFRTRGTGLSSDVETTIVPQLLSEIDGVERLDNVIVIGASNREDMIDPAILRPGRLDVKIKIERPDPEGAREIFAKYLTTDLPIHADDLAEHQGDTAAVVDGMIQRVVERMYADTEENQFLEVTYASGDKETLYFKDFNSGAMIQNIVDRAKKSAIKDFLATGQRGIRVEHLVTACVDEFKENEDLPNTTNPDDWARISGKKGERIVFIRTIVQDKNGSGRSAAGRTIETATSTGQYL</sequence>
<feature type="chain" id="PRO_0000397020" description="Proteasome-associated ATPase">
    <location>
        <begin position="1"/>
        <end position="581"/>
    </location>
</feature>
<feature type="region of interest" description="Disordered" evidence="2">
    <location>
        <begin position="1"/>
        <end position="28"/>
    </location>
</feature>
<feature type="region of interest" description="Disordered" evidence="2">
    <location>
        <begin position="561"/>
        <end position="581"/>
    </location>
</feature>
<feature type="region of interest" description="Docks into pockets in the proteasome alpha-ring" evidence="1">
    <location>
        <begin position="580"/>
        <end position="581"/>
    </location>
</feature>
<feature type="coiled-coil region" evidence="1">
    <location>
        <begin position="27"/>
        <end position="66"/>
    </location>
</feature>
<feature type="compositionally biased region" description="Polar residues" evidence="2">
    <location>
        <begin position="14"/>
        <end position="24"/>
    </location>
</feature>
<feature type="compositionally biased region" description="Polar residues" evidence="2">
    <location>
        <begin position="572"/>
        <end position="581"/>
    </location>
</feature>
<feature type="binding site" evidence="1">
    <location>
        <begin position="248"/>
        <end position="253"/>
    </location>
    <ligand>
        <name>ATP</name>
        <dbReference type="ChEBI" id="CHEBI:30616"/>
    </ligand>
</feature>
<dbReference type="EMBL" id="CP001819">
    <property type="protein sequence ID" value="ACZ22012.1"/>
    <property type="molecule type" value="Genomic_DNA"/>
</dbReference>
<dbReference type="SMR" id="D1BHU2"/>
<dbReference type="STRING" id="446469.Sked_20900"/>
<dbReference type="KEGG" id="ske:Sked_20900"/>
<dbReference type="eggNOG" id="COG1222">
    <property type="taxonomic scope" value="Bacteria"/>
</dbReference>
<dbReference type="HOGENOM" id="CLU_036054_0_0_11"/>
<dbReference type="UniPathway" id="UPA00997"/>
<dbReference type="Proteomes" id="UP000000322">
    <property type="component" value="Chromosome"/>
</dbReference>
<dbReference type="GO" id="GO:0000502">
    <property type="term" value="C:proteasome complex"/>
    <property type="evidence" value="ECO:0007669"/>
    <property type="project" value="UniProtKB-KW"/>
</dbReference>
<dbReference type="GO" id="GO:0005524">
    <property type="term" value="F:ATP binding"/>
    <property type="evidence" value="ECO:0007669"/>
    <property type="project" value="UniProtKB-UniRule"/>
</dbReference>
<dbReference type="GO" id="GO:0016887">
    <property type="term" value="F:ATP hydrolysis activity"/>
    <property type="evidence" value="ECO:0007669"/>
    <property type="project" value="UniProtKB-UniRule"/>
</dbReference>
<dbReference type="GO" id="GO:0019941">
    <property type="term" value="P:modification-dependent protein catabolic process"/>
    <property type="evidence" value="ECO:0007669"/>
    <property type="project" value="InterPro"/>
</dbReference>
<dbReference type="GO" id="GO:0010498">
    <property type="term" value="P:proteasomal protein catabolic process"/>
    <property type="evidence" value="ECO:0007669"/>
    <property type="project" value="InterPro"/>
</dbReference>
<dbReference type="Gene3D" id="1.10.8.60">
    <property type="match status" value="1"/>
</dbReference>
<dbReference type="Gene3D" id="1.20.5.170">
    <property type="match status" value="1"/>
</dbReference>
<dbReference type="Gene3D" id="2.40.50.140">
    <property type="entry name" value="Nucleic acid-binding proteins"/>
    <property type="match status" value="2"/>
</dbReference>
<dbReference type="Gene3D" id="3.40.50.300">
    <property type="entry name" value="P-loop containing nucleotide triphosphate hydrolases"/>
    <property type="match status" value="2"/>
</dbReference>
<dbReference type="HAMAP" id="MF_02112">
    <property type="entry name" value="ARC_ATPase"/>
    <property type="match status" value="1"/>
</dbReference>
<dbReference type="InterPro" id="IPR003593">
    <property type="entry name" value="AAA+_ATPase"/>
</dbReference>
<dbReference type="InterPro" id="IPR050168">
    <property type="entry name" value="AAA_ATPase_domain"/>
</dbReference>
<dbReference type="InterPro" id="IPR003959">
    <property type="entry name" value="ATPase_AAA_core"/>
</dbReference>
<dbReference type="InterPro" id="IPR003960">
    <property type="entry name" value="ATPase_AAA_CS"/>
</dbReference>
<dbReference type="InterPro" id="IPR012340">
    <property type="entry name" value="NA-bd_OB-fold"/>
</dbReference>
<dbReference type="InterPro" id="IPR027417">
    <property type="entry name" value="P-loop_NTPase"/>
</dbReference>
<dbReference type="InterPro" id="IPR032501">
    <property type="entry name" value="Prot_ATP_ID_OB_2nd"/>
</dbReference>
<dbReference type="InterPro" id="IPR041626">
    <property type="entry name" value="Prot_ATP_ID_OB_N"/>
</dbReference>
<dbReference type="InterPro" id="IPR022482">
    <property type="entry name" value="Proteasome_ATPase"/>
</dbReference>
<dbReference type="NCBIfam" id="TIGR03689">
    <property type="entry name" value="pup_AAA"/>
    <property type="match status" value="1"/>
</dbReference>
<dbReference type="PANTHER" id="PTHR23077">
    <property type="entry name" value="AAA-FAMILY ATPASE"/>
    <property type="match status" value="1"/>
</dbReference>
<dbReference type="PANTHER" id="PTHR23077:SF144">
    <property type="entry name" value="PROTEASOME-ASSOCIATED ATPASE"/>
    <property type="match status" value="1"/>
</dbReference>
<dbReference type="Pfam" id="PF00004">
    <property type="entry name" value="AAA"/>
    <property type="match status" value="1"/>
</dbReference>
<dbReference type="Pfam" id="PF16450">
    <property type="entry name" value="Prot_ATP_ID_OB_C"/>
    <property type="match status" value="1"/>
</dbReference>
<dbReference type="Pfam" id="PF17758">
    <property type="entry name" value="Prot_ATP_ID_OB_N"/>
    <property type="match status" value="1"/>
</dbReference>
<dbReference type="SMART" id="SM00382">
    <property type="entry name" value="AAA"/>
    <property type="match status" value="1"/>
</dbReference>
<dbReference type="SUPFAM" id="SSF52540">
    <property type="entry name" value="P-loop containing nucleoside triphosphate hydrolases"/>
    <property type="match status" value="1"/>
</dbReference>
<dbReference type="PROSITE" id="PS00674">
    <property type="entry name" value="AAA"/>
    <property type="match status" value="1"/>
</dbReference>